<reference key="1">
    <citation type="journal article" date="2005" name="Genome Res.">
        <title>Comparative and functional genomic analyses of the pathogenicity of phytopathogen Xanthomonas campestris pv. campestris.</title>
        <authorList>
            <person name="Qian W."/>
            <person name="Jia Y."/>
            <person name="Ren S.-X."/>
            <person name="He Y.-Q."/>
            <person name="Feng J.-X."/>
            <person name="Lu L.-F."/>
            <person name="Sun Q."/>
            <person name="Ying G."/>
            <person name="Tang D.-J."/>
            <person name="Tang H."/>
            <person name="Wu W."/>
            <person name="Hao P."/>
            <person name="Wang L."/>
            <person name="Jiang B.-L."/>
            <person name="Zeng S."/>
            <person name="Gu W.-Y."/>
            <person name="Lu G."/>
            <person name="Rong L."/>
            <person name="Tian Y."/>
            <person name="Yao Z."/>
            <person name="Fu G."/>
            <person name="Chen B."/>
            <person name="Fang R."/>
            <person name="Qiang B."/>
            <person name="Chen Z."/>
            <person name="Zhao G.-P."/>
            <person name="Tang J.-L."/>
            <person name="He C."/>
        </authorList>
    </citation>
    <scope>NUCLEOTIDE SEQUENCE [LARGE SCALE GENOMIC DNA]</scope>
    <source>
        <strain>8004</strain>
    </source>
</reference>
<name>SYI_XANC8</name>
<keyword id="KW-0030">Aminoacyl-tRNA synthetase</keyword>
<keyword id="KW-0067">ATP-binding</keyword>
<keyword id="KW-0963">Cytoplasm</keyword>
<keyword id="KW-0436">Ligase</keyword>
<keyword id="KW-0479">Metal-binding</keyword>
<keyword id="KW-0547">Nucleotide-binding</keyword>
<keyword id="KW-0648">Protein biosynthesis</keyword>
<keyword id="KW-0862">Zinc</keyword>
<organism>
    <name type="scientific">Xanthomonas campestris pv. campestris (strain 8004)</name>
    <dbReference type="NCBI Taxonomy" id="314565"/>
    <lineage>
        <taxon>Bacteria</taxon>
        <taxon>Pseudomonadati</taxon>
        <taxon>Pseudomonadota</taxon>
        <taxon>Gammaproteobacteria</taxon>
        <taxon>Lysobacterales</taxon>
        <taxon>Lysobacteraceae</taxon>
        <taxon>Xanthomonas</taxon>
    </lineage>
</organism>
<accession>Q4US40</accession>
<comment type="function">
    <text evidence="1">Catalyzes the attachment of isoleucine to tRNA(Ile). As IleRS can inadvertently accommodate and process structurally similar amino acids such as valine, to avoid such errors it has two additional distinct tRNA(Ile)-dependent editing activities. One activity is designated as 'pretransfer' editing and involves the hydrolysis of activated Val-AMP. The other activity is designated 'posttransfer' editing and involves deacylation of mischarged Val-tRNA(Ile).</text>
</comment>
<comment type="catalytic activity">
    <reaction evidence="1">
        <text>tRNA(Ile) + L-isoleucine + ATP = L-isoleucyl-tRNA(Ile) + AMP + diphosphate</text>
        <dbReference type="Rhea" id="RHEA:11060"/>
        <dbReference type="Rhea" id="RHEA-COMP:9666"/>
        <dbReference type="Rhea" id="RHEA-COMP:9695"/>
        <dbReference type="ChEBI" id="CHEBI:30616"/>
        <dbReference type="ChEBI" id="CHEBI:33019"/>
        <dbReference type="ChEBI" id="CHEBI:58045"/>
        <dbReference type="ChEBI" id="CHEBI:78442"/>
        <dbReference type="ChEBI" id="CHEBI:78528"/>
        <dbReference type="ChEBI" id="CHEBI:456215"/>
        <dbReference type="EC" id="6.1.1.5"/>
    </reaction>
</comment>
<comment type="cofactor">
    <cofactor evidence="1">
        <name>Zn(2+)</name>
        <dbReference type="ChEBI" id="CHEBI:29105"/>
    </cofactor>
    <text evidence="1">Binds 1 zinc ion per subunit.</text>
</comment>
<comment type="subunit">
    <text evidence="1">Monomer.</text>
</comment>
<comment type="subcellular location">
    <subcellularLocation>
        <location evidence="1">Cytoplasm</location>
    </subcellularLocation>
</comment>
<comment type="domain">
    <text evidence="1">IleRS has two distinct active sites: one for aminoacylation and one for editing. The misactivated valine is translocated from the active site to the editing site, which sterically excludes the correctly activated isoleucine. The single editing site contains two valyl binding pockets, one specific for each substrate (Val-AMP or Val-tRNA(Ile)).</text>
</comment>
<comment type="similarity">
    <text evidence="1">Belongs to the class-I aminoacyl-tRNA synthetase family. IleS type 1 subfamily.</text>
</comment>
<feature type="chain" id="PRO_0000098506" description="Isoleucine--tRNA ligase">
    <location>
        <begin position="1"/>
        <end position="943"/>
    </location>
</feature>
<feature type="short sequence motif" description="'HIGH' region">
    <location>
        <begin position="59"/>
        <end position="69"/>
    </location>
</feature>
<feature type="short sequence motif" description="'KMSKS' region">
    <location>
        <begin position="618"/>
        <end position="622"/>
    </location>
</feature>
<feature type="binding site" evidence="1">
    <location>
        <position position="577"/>
    </location>
    <ligand>
        <name>L-isoleucyl-5'-AMP</name>
        <dbReference type="ChEBI" id="CHEBI:178002"/>
    </ligand>
</feature>
<feature type="binding site" evidence="1">
    <location>
        <position position="621"/>
    </location>
    <ligand>
        <name>ATP</name>
        <dbReference type="ChEBI" id="CHEBI:30616"/>
    </ligand>
</feature>
<feature type="binding site" evidence="1">
    <location>
        <position position="906"/>
    </location>
    <ligand>
        <name>Zn(2+)</name>
        <dbReference type="ChEBI" id="CHEBI:29105"/>
    </ligand>
</feature>
<feature type="binding site" evidence="1">
    <location>
        <position position="909"/>
    </location>
    <ligand>
        <name>Zn(2+)</name>
        <dbReference type="ChEBI" id="CHEBI:29105"/>
    </ligand>
</feature>
<feature type="binding site" evidence="1">
    <location>
        <position position="926"/>
    </location>
    <ligand>
        <name>Zn(2+)</name>
        <dbReference type="ChEBI" id="CHEBI:29105"/>
    </ligand>
</feature>
<feature type="binding site" evidence="1">
    <location>
        <position position="929"/>
    </location>
    <ligand>
        <name>Zn(2+)</name>
        <dbReference type="ChEBI" id="CHEBI:29105"/>
    </ligand>
</feature>
<proteinExistence type="inferred from homology"/>
<gene>
    <name evidence="1" type="primary">ileS</name>
    <name type="ordered locus">XC_3087</name>
</gene>
<dbReference type="EC" id="6.1.1.5" evidence="1"/>
<dbReference type="EMBL" id="CP000050">
    <property type="protein sequence ID" value="AAY50133.1"/>
    <property type="molecule type" value="Genomic_DNA"/>
</dbReference>
<dbReference type="RefSeq" id="WP_011036353.1">
    <property type="nucleotide sequence ID" value="NZ_CP155948.1"/>
</dbReference>
<dbReference type="SMR" id="Q4US40"/>
<dbReference type="KEGG" id="xcb:XC_3087"/>
<dbReference type="HOGENOM" id="CLU_001493_7_0_6"/>
<dbReference type="Proteomes" id="UP000000420">
    <property type="component" value="Chromosome"/>
</dbReference>
<dbReference type="GO" id="GO:0005829">
    <property type="term" value="C:cytosol"/>
    <property type="evidence" value="ECO:0007669"/>
    <property type="project" value="TreeGrafter"/>
</dbReference>
<dbReference type="GO" id="GO:0002161">
    <property type="term" value="F:aminoacyl-tRNA deacylase activity"/>
    <property type="evidence" value="ECO:0007669"/>
    <property type="project" value="InterPro"/>
</dbReference>
<dbReference type="GO" id="GO:0005524">
    <property type="term" value="F:ATP binding"/>
    <property type="evidence" value="ECO:0007669"/>
    <property type="project" value="UniProtKB-UniRule"/>
</dbReference>
<dbReference type="GO" id="GO:0004822">
    <property type="term" value="F:isoleucine-tRNA ligase activity"/>
    <property type="evidence" value="ECO:0007669"/>
    <property type="project" value="UniProtKB-UniRule"/>
</dbReference>
<dbReference type="GO" id="GO:0000049">
    <property type="term" value="F:tRNA binding"/>
    <property type="evidence" value="ECO:0007669"/>
    <property type="project" value="InterPro"/>
</dbReference>
<dbReference type="GO" id="GO:0008270">
    <property type="term" value="F:zinc ion binding"/>
    <property type="evidence" value="ECO:0007669"/>
    <property type="project" value="UniProtKB-UniRule"/>
</dbReference>
<dbReference type="GO" id="GO:0006428">
    <property type="term" value="P:isoleucyl-tRNA aminoacylation"/>
    <property type="evidence" value="ECO:0007669"/>
    <property type="project" value="UniProtKB-UniRule"/>
</dbReference>
<dbReference type="CDD" id="cd07960">
    <property type="entry name" value="Anticodon_Ia_Ile_BEm"/>
    <property type="match status" value="1"/>
</dbReference>
<dbReference type="FunFam" id="1.10.730.20:FF:000001">
    <property type="entry name" value="Isoleucine--tRNA ligase"/>
    <property type="match status" value="1"/>
</dbReference>
<dbReference type="FunFam" id="3.40.50.620:FF:000042">
    <property type="entry name" value="Isoleucine--tRNA ligase"/>
    <property type="match status" value="1"/>
</dbReference>
<dbReference type="FunFam" id="3.40.50.620:FF:000048">
    <property type="entry name" value="Isoleucine--tRNA ligase"/>
    <property type="match status" value="1"/>
</dbReference>
<dbReference type="FunFam" id="3.90.740.10:FF:000022">
    <property type="entry name" value="Isoleucine--tRNA ligase"/>
    <property type="match status" value="1"/>
</dbReference>
<dbReference type="Gene3D" id="1.10.730.20">
    <property type="match status" value="1"/>
</dbReference>
<dbReference type="Gene3D" id="3.40.50.620">
    <property type="entry name" value="HUPs"/>
    <property type="match status" value="2"/>
</dbReference>
<dbReference type="Gene3D" id="1.10.10.830">
    <property type="entry name" value="Ile-tRNA synthetase CP2 domain-like"/>
    <property type="match status" value="1"/>
</dbReference>
<dbReference type="Gene3D" id="3.90.740.10">
    <property type="entry name" value="Valyl/Leucyl/Isoleucyl-tRNA synthetase, editing domain"/>
    <property type="match status" value="1"/>
</dbReference>
<dbReference type="HAMAP" id="MF_02002">
    <property type="entry name" value="Ile_tRNA_synth_type1"/>
    <property type="match status" value="1"/>
</dbReference>
<dbReference type="InterPro" id="IPR001412">
    <property type="entry name" value="aa-tRNA-synth_I_CS"/>
</dbReference>
<dbReference type="InterPro" id="IPR002300">
    <property type="entry name" value="aa-tRNA-synth_Ia"/>
</dbReference>
<dbReference type="InterPro" id="IPR033708">
    <property type="entry name" value="Anticodon_Ile_BEm"/>
</dbReference>
<dbReference type="InterPro" id="IPR002301">
    <property type="entry name" value="Ile-tRNA-ligase"/>
</dbReference>
<dbReference type="InterPro" id="IPR023585">
    <property type="entry name" value="Ile-tRNA-ligase_type1"/>
</dbReference>
<dbReference type="InterPro" id="IPR050081">
    <property type="entry name" value="Ile-tRNA_ligase"/>
</dbReference>
<dbReference type="InterPro" id="IPR013155">
    <property type="entry name" value="M/V/L/I-tRNA-synth_anticd-bd"/>
</dbReference>
<dbReference type="InterPro" id="IPR014729">
    <property type="entry name" value="Rossmann-like_a/b/a_fold"/>
</dbReference>
<dbReference type="InterPro" id="IPR009080">
    <property type="entry name" value="tRNAsynth_Ia_anticodon-bd"/>
</dbReference>
<dbReference type="InterPro" id="IPR009008">
    <property type="entry name" value="Val/Leu/Ile-tRNA-synth_edit"/>
</dbReference>
<dbReference type="InterPro" id="IPR010663">
    <property type="entry name" value="Znf_FPG/IleRS"/>
</dbReference>
<dbReference type="NCBIfam" id="TIGR00392">
    <property type="entry name" value="ileS"/>
    <property type="match status" value="1"/>
</dbReference>
<dbReference type="PANTHER" id="PTHR42765:SF1">
    <property type="entry name" value="ISOLEUCINE--TRNA LIGASE, MITOCHONDRIAL"/>
    <property type="match status" value="1"/>
</dbReference>
<dbReference type="PANTHER" id="PTHR42765">
    <property type="entry name" value="SOLEUCYL-TRNA SYNTHETASE"/>
    <property type="match status" value="1"/>
</dbReference>
<dbReference type="Pfam" id="PF08264">
    <property type="entry name" value="Anticodon_1"/>
    <property type="match status" value="1"/>
</dbReference>
<dbReference type="Pfam" id="PF00133">
    <property type="entry name" value="tRNA-synt_1"/>
    <property type="match status" value="1"/>
</dbReference>
<dbReference type="Pfam" id="PF06827">
    <property type="entry name" value="zf-FPG_IleRS"/>
    <property type="match status" value="1"/>
</dbReference>
<dbReference type="PRINTS" id="PR00984">
    <property type="entry name" value="TRNASYNTHILE"/>
</dbReference>
<dbReference type="SUPFAM" id="SSF47323">
    <property type="entry name" value="Anticodon-binding domain of a subclass of class I aminoacyl-tRNA synthetases"/>
    <property type="match status" value="1"/>
</dbReference>
<dbReference type="SUPFAM" id="SSF52374">
    <property type="entry name" value="Nucleotidylyl transferase"/>
    <property type="match status" value="1"/>
</dbReference>
<dbReference type="SUPFAM" id="SSF50677">
    <property type="entry name" value="ValRS/IleRS/LeuRS editing domain"/>
    <property type="match status" value="1"/>
</dbReference>
<dbReference type="PROSITE" id="PS00178">
    <property type="entry name" value="AA_TRNA_LIGASE_I"/>
    <property type="match status" value="1"/>
</dbReference>
<protein>
    <recommendedName>
        <fullName evidence="1">Isoleucine--tRNA ligase</fullName>
        <ecNumber evidence="1">6.1.1.5</ecNumber>
    </recommendedName>
    <alternativeName>
        <fullName evidence="1">Isoleucyl-tRNA synthetase</fullName>
        <shortName evidence="1">IleRS</shortName>
    </alternativeName>
</protein>
<evidence type="ECO:0000255" key="1">
    <source>
        <dbReference type="HAMAP-Rule" id="MF_02002"/>
    </source>
</evidence>
<sequence>MTQDYKATLHLPATDFPMRGDLPKREPAMLERWEREGLYAQVRANAAGRPLFVLHDGPPYANGQIHLGHAVNKILKDIIVKSKYLAGFDAPYIPGWDCHGLPIEIAIEKKFGKVGVKLDAAQFRQKCREYATEQIDLQRRDFKRLGVIGDWDNPYKTLDFRFEANEIRALAKVIDNGHLTRGVKPVHWCFDCGSALAEAEIEYADKLSPTVDIAYPARDPAAIAAAFGVTLPAGTQVAVPIWTTTPWTLPASLAVSLGAELDYVLVEGPADRGQPRWLVIAEALAGKALARYGVEAVVVHGHAKGAALDQLLLAHPFYAERDIPLILGDHVSDDDGTGAVHTAPGHGQEDYQVSKQYGLLERYSAAQINPIDGRGVYLPSTPPLGDTVLAGLHIWKANDVIIDALRDTGVLLAASTMEHSYPHCWRHKTPIAFRATPQWFISMEQANLRADALKAIETVHWYPSWGQARIAGMIDGRPDWTISRQRTWGVPIALFVHRETGEPHPRSTELMRQVAERVEQGGVDVWYTLDAAELLGDEAGDYDKITDILDVWFDSGVTHEAVLVDRGLPKPADLYLEGSDQHRGWFQSSLLTGVAMDKVAPYKQCLTHGFTVDEHGRKMSKSLGNGIEPQEIMRTLGADILRLWIASADYSNEMSLSQEILKRNADAYRRLRNTARFLLGNLHGFDPLQHLVALDDMVLLDRWIVHRAHELQEKITAAYARYDFAEIVQALLNFCSVDLGSLYLDVTKDRLYTMAEDARGRRSAQSAMYHVAEAFVRWIAPVLSFTAEELWAYLPGEHSGNVLFATWYDGLAPMPADAALTSADVDKLLALREQVAKVLEPMRANGAIGAALEAEITVAADAQTAARWQPLSDELRFLFISGDVTVTAASTDDIFVSAQPTTKAKCVRCWHHQASVGSDPRHPELCSRCVSNIEGPGEERRWF</sequence>